<gene>
    <name type="primary">RPL4</name>
    <name type="synonym">RPL1</name>
</gene>
<accession>P49165</accession>
<feature type="chain" id="PRO_0000129357" description="Large ribosomal subunit protein uL4">
    <location>
        <begin position="1"/>
        <end position="386"/>
    </location>
</feature>
<feature type="region of interest" description="Disordered" evidence="1">
    <location>
        <begin position="341"/>
        <end position="386"/>
    </location>
</feature>
<feature type="compositionally biased region" description="Basic and acidic residues" evidence="1">
    <location>
        <begin position="341"/>
        <end position="357"/>
    </location>
</feature>
<feature type="compositionally biased region" description="Basic residues" evidence="1">
    <location>
        <begin position="369"/>
        <end position="386"/>
    </location>
</feature>
<reference key="1">
    <citation type="journal article" date="1993" name="Dev. Genet.">
        <title>Sequence analysis of translationally controlled maternal mRNAs from Urechis caupo.</title>
        <authorList>
            <person name="Rosenthal E.T."/>
        </authorList>
    </citation>
    <scope>NUCLEOTIDE SEQUENCE [MRNA]</scope>
</reference>
<keyword id="KW-0687">Ribonucleoprotein</keyword>
<keyword id="KW-0689">Ribosomal protein</keyword>
<name>RL4_URECA</name>
<organism>
    <name type="scientific">Urechis caupo</name>
    <name type="common">Innkeeper worm</name>
    <name type="synonym">Spoonworm</name>
    <dbReference type="NCBI Taxonomy" id="6431"/>
    <lineage>
        <taxon>Eukaryota</taxon>
        <taxon>Metazoa</taxon>
        <taxon>Spiralia</taxon>
        <taxon>Lophotrochozoa</taxon>
        <taxon>Annelida</taxon>
        <taxon>Polychaeta</taxon>
        <taxon>Echiura</taxon>
        <taxon>Xenopneusta</taxon>
        <taxon>Urechidae</taxon>
        <taxon>Urechis</taxon>
    </lineage>
</organism>
<protein>
    <recommendedName>
        <fullName evidence="2">Large ribosomal subunit protein uL4</fullName>
    </recommendedName>
    <alternativeName>
        <fullName>60S ribosomal protein L4</fullName>
    </alternativeName>
    <alternativeName>
        <fullName>L1</fullName>
    </alternativeName>
</protein>
<dbReference type="EMBL" id="U30495">
    <property type="protein sequence ID" value="AAA74021.1"/>
    <property type="molecule type" value="mRNA"/>
</dbReference>
<dbReference type="PIR" id="T12048">
    <property type="entry name" value="T12048"/>
</dbReference>
<dbReference type="SMR" id="P49165"/>
<dbReference type="GO" id="GO:1990904">
    <property type="term" value="C:ribonucleoprotein complex"/>
    <property type="evidence" value="ECO:0007669"/>
    <property type="project" value="UniProtKB-KW"/>
</dbReference>
<dbReference type="GO" id="GO:0005840">
    <property type="term" value="C:ribosome"/>
    <property type="evidence" value="ECO:0007669"/>
    <property type="project" value="UniProtKB-KW"/>
</dbReference>
<dbReference type="GO" id="GO:0003735">
    <property type="term" value="F:structural constituent of ribosome"/>
    <property type="evidence" value="ECO:0007669"/>
    <property type="project" value="InterPro"/>
</dbReference>
<dbReference type="GO" id="GO:0006412">
    <property type="term" value="P:translation"/>
    <property type="evidence" value="ECO:0007669"/>
    <property type="project" value="InterPro"/>
</dbReference>
<dbReference type="FunFam" id="3.40.1370.10:FF:000002">
    <property type="entry name" value="60S ribosomal protein L4"/>
    <property type="match status" value="1"/>
</dbReference>
<dbReference type="Gene3D" id="3.40.1370.10">
    <property type="match status" value="1"/>
</dbReference>
<dbReference type="InterPro" id="IPR025755">
    <property type="entry name" value="Ribos_uL4_C_dom"/>
</dbReference>
<dbReference type="InterPro" id="IPR002136">
    <property type="entry name" value="Ribosomal_uL4"/>
</dbReference>
<dbReference type="InterPro" id="IPR023574">
    <property type="entry name" value="Ribosomal_uL4_dom_sf"/>
</dbReference>
<dbReference type="InterPro" id="IPR013000">
    <property type="entry name" value="Ribosomal_uL4_euk/arc_CS"/>
</dbReference>
<dbReference type="InterPro" id="IPR045240">
    <property type="entry name" value="Ribosomal_uL4_euk/arch"/>
</dbReference>
<dbReference type="PANTHER" id="PTHR19431">
    <property type="entry name" value="60S RIBOSOMAL PROTEIN L4"/>
    <property type="match status" value="1"/>
</dbReference>
<dbReference type="Pfam" id="PF14374">
    <property type="entry name" value="Ribos_L4_asso_C"/>
    <property type="match status" value="1"/>
</dbReference>
<dbReference type="Pfam" id="PF00573">
    <property type="entry name" value="Ribosomal_L4"/>
    <property type="match status" value="1"/>
</dbReference>
<dbReference type="SUPFAM" id="SSF52166">
    <property type="entry name" value="Ribosomal protein L4"/>
    <property type="match status" value="1"/>
</dbReference>
<dbReference type="PROSITE" id="PS00939">
    <property type="entry name" value="RIBOSOMAL_L1E"/>
    <property type="match status" value="1"/>
</dbReference>
<sequence length="386" mass="43135">MAARPLITVHSDKGAASESNVTLPAVFRAPIRPDIVNFVHFELKKNGRQPYAVSQKAGHQTSAESWGTGRAVARIPRVRGGGTHRSGQGAFGNMCRGRRMFAPTKTWRRWHRRVNTTQRRHALVSAIAATGIPAVVMSKGHCIEQIPEVPLVVSDSVESIKKTKEAVVVLRRLKAWPDVEKVKNSRRFRAGKGKLRNRRAIQRRGPLIIYGTDNGISRAFRNIPGITLVNVNRLNLLSMAPGGHVGRFCIWTESAFKQLDNIYGTWKRPSAEKSHYNLPMPKMTNTDLSRLLKSDEIQNALREPKKDKARRLQKKNPLKNYRVMMRLNPFAGAQKAAAKAVEQRRLKEKQAKLDQKRGIATPVEGAGKGRPRKTTAKPTKAKAGKK</sequence>
<comment type="similarity">
    <text evidence="2">Belongs to the universal ribosomal protein uL4 family.</text>
</comment>
<proteinExistence type="evidence at transcript level"/>
<evidence type="ECO:0000256" key="1">
    <source>
        <dbReference type="SAM" id="MobiDB-lite"/>
    </source>
</evidence>
<evidence type="ECO:0000305" key="2"/>